<proteinExistence type="predicted"/>
<protein>
    <recommendedName>
        <fullName>Uncharacterized protein ORF6</fullName>
    </recommendedName>
</protein>
<feature type="chain" id="PRO_0000339005" description="Uncharacterized protein ORF6">
    <location>
        <begin position="1"/>
        <end position="104"/>
    </location>
</feature>
<organismHost>
    <name type="scientific">Galliformes</name>
    <dbReference type="NCBI Taxonomy" id="8976"/>
</organismHost>
<organism>
    <name type="scientific">Fowl adenovirus A serotype 1 (strain CELO / Phelps)</name>
    <name type="common">FAdV-1</name>
    <name type="synonym">Avian adenovirus gal1 (strain Phelps)</name>
    <dbReference type="NCBI Taxonomy" id="10553"/>
    <lineage>
        <taxon>Viruses</taxon>
        <taxon>Varidnaviria</taxon>
        <taxon>Bamfordvirae</taxon>
        <taxon>Preplasmiviricota</taxon>
        <taxon>Tectiliviricetes</taxon>
        <taxon>Rowavirales</taxon>
        <taxon>Adenoviridae</taxon>
        <taxon>Aviadenovirus</taxon>
        <taxon>Fowl aviadenovirus A</taxon>
    </lineage>
</organism>
<gene>
    <name type="ORF">6</name>
</gene>
<accession>Q89496</accession>
<dbReference type="EMBL" id="U46933">
    <property type="protein sequence ID" value="AAC54923.1"/>
    <property type="molecule type" value="Genomic_DNA"/>
</dbReference>
<dbReference type="EMBL" id="X84724">
    <property type="protein sequence ID" value="CAA59213.1"/>
    <property type="molecule type" value="Genomic_DNA"/>
</dbReference>
<dbReference type="PIR" id="S54132">
    <property type="entry name" value="S54132"/>
</dbReference>
<dbReference type="RefSeq" id="NP_043897.1">
    <property type="nucleotide sequence ID" value="NC_001720.1"/>
</dbReference>
<dbReference type="KEGG" id="vg:1733457"/>
<dbReference type="Proteomes" id="UP000001594">
    <property type="component" value="Segment"/>
</dbReference>
<sequence>MLLRQTGWVTALLREIVSTMMVAVTVTRHAFMRTTGDRTKGTDEGTCEKDTSKLIERRAIFTDIFSAIRKPVVKNLKSVFLRASIHGSKSYFIPGVIKSNLRER</sequence>
<reference key="1">
    <citation type="journal article" date="1996" name="J. Virol.">
        <title>The complete DNA sequence and genomic organization of the avian adenovirus CELO.</title>
        <authorList>
            <person name="Chiocca S."/>
            <person name="Kurzbauer R."/>
            <person name="Schaffner G."/>
            <person name="Baker A."/>
            <person name="Mautner V."/>
            <person name="Cotten M."/>
        </authorList>
    </citation>
    <scope>NUCLEOTIDE SEQUENCE [LARGE SCALE GENOMIC DNA]</scope>
</reference>
<reference key="2">
    <citation type="journal article" date="1995" name="J. Mol. Biol.">
        <title>The avian adenovirus penton: two fibres and one base.</title>
        <authorList>
            <person name="Hess M."/>
            <person name="Cuzange A."/>
            <person name="Ruigrok R.W."/>
            <person name="Chroboczek J."/>
            <person name="Jacrot B."/>
        </authorList>
    </citation>
    <scope>NUCLEOTIDE SEQUENCE [GENOMIC DNA]</scope>
</reference>
<name>YO6_ADEG1</name>
<keyword id="KW-1185">Reference proteome</keyword>